<sequence>MKTLGKWLLLGLVVMSMPARAALDIVITEGVDAARPIAVIPFVWQGQGPAPQQISDVVMSDLARSGTFNPIDELGLPQRNIAKVSQFVAKEWSNVAAEAVVMGSVKPMGPDQFLVNFELVDLVKAQMQAGNGPQSSSEYLIDSSEVVISAEQFRQYGHRISDIVYEKLTGIRGAFLTRIAYVVVKHGEKSPYHLMISDYDGHNEKMLLRSPEPLMSPSWSPDGSKLAYVSFENKKAEVFVQNIYTQARAKITSYDGINGAPVFSPDGKKLALTLSRDGQPEIYVVDIDTKALKRVTNHYAIDTEASWFPDGKSLIFTSERGGRPQIYKVTLASGKVQRMTFEGEWNLGGSISPDGRSMIFVNRTNGKFNIARMDLETRFVQVLTSTRLDESPSVAPNGTMVIYGTTYQGKQVLAAVSTDGRFKARLPAGQGEVKSPSWSPFL</sequence>
<proteinExistence type="inferred from homology"/>
<name>TOLB_SHEWM</name>
<feature type="signal peptide" evidence="1">
    <location>
        <begin position="1"/>
        <end position="21"/>
    </location>
</feature>
<feature type="chain" id="PRO_5000316781" description="Tol-Pal system protein TolB" evidence="1">
    <location>
        <begin position="22"/>
        <end position="442"/>
    </location>
</feature>
<accession>B1KIF6</accession>
<comment type="function">
    <text evidence="1">Part of the Tol-Pal system, which plays a role in outer membrane invagination during cell division and is important for maintaining outer membrane integrity.</text>
</comment>
<comment type="subunit">
    <text evidence="1">The Tol-Pal system is composed of five core proteins: the inner membrane proteins TolA, TolQ and TolR, the periplasmic protein TolB and the outer membrane protein Pal. They form a network linking the inner and outer membranes and the peptidoglycan layer.</text>
</comment>
<comment type="subcellular location">
    <subcellularLocation>
        <location evidence="1">Periplasm</location>
    </subcellularLocation>
</comment>
<comment type="similarity">
    <text evidence="1">Belongs to the TolB family.</text>
</comment>
<reference key="1">
    <citation type="submission" date="2008-02" db="EMBL/GenBank/DDBJ databases">
        <title>Complete sequence of Shewanella woodyi ATCC 51908.</title>
        <authorList>
            <consortium name="US DOE Joint Genome Institute"/>
            <person name="Copeland A."/>
            <person name="Lucas S."/>
            <person name="Lapidus A."/>
            <person name="Glavina del Rio T."/>
            <person name="Dalin E."/>
            <person name="Tice H."/>
            <person name="Bruce D."/>
            <person name="Goodwin L."/>
            <person name="Pitluck S."/>
            <person name="Sims D."/>
            <person name="Brettin T."/>
            <person name="Detter J.C."/>
            <person name="Han C."/>
            <person name="Kuske C.R."/>
            <person name="Schmutz J."/>
            <person name="Larimer F."/>
            <person name="Land M."/>
            <person name="Hauser L."/>
            <person name="Kyrpides N."/>
            <person name="Lykidis A."/>
            <person name="Zhao J.-S."/>
            <person name="Richardson P."/>
        </authorList>
    </citation>
    <scope>NUCLEOTIDE SEQUENCE [LARGE SCALE GENOMIC DNA]</scope>
    <source>
        <strain>ATCC 51908 / MS32</strain>
    </source>
</reference>
<dbReference type="EMBL" id="CP000961">
    <property type="protein sequence ID" value="ACA87007.1"/>
    <property type="molecule type" value="Genomic_DNA"/>
</dbReference>
<dbReference type="RefSeq" id="WP_012325344.1">
    <property type="nucleotide sequence ID" value="NC_010506.1"/>
</dbReference>
<dbReference type="SMR" id="B1KIF6"/>
<dbReference type="STRING" id="392500.Swoo_2731"/>
<dbReference type="KEGG" id="swd:Swoo_2731"/>
<dbReference type="eggNOG" id="COG0823">
    <property type="taxonomic scope" value="Bacteria"/>
</dbReference>
<dbReference type="HOGENOM" id="CLU_047123_0_0_6"/>
<dbReference type="Proteomes" id="UP000002168">
    <property type="component" value="Chromosome"/>
</dbReference>
<dbReference type="GO" id="GO:0042597">
    <property type="term" value="C:periplasmic space"/>
    <property type="evidence" value="ECO:0007669"/>
    <property type="project" value="UniProtKB-SubCell"/>
</dbReference>
<dbReference type="GO" id="GO:0051301">
    <property type="term" value="P:cell division"/>
    <property type="evidence" value="ECO:0007669"/>
    <property type="project" value="UniProtKB-UniRule"/>
</dbReference>
<dbReference type="GO" id="GO:0017038">
    <property type="term" value="P:protein import"/>
    <property type="evidence" value="ECO:0007669"/>
    <property type="project" value="InterPro"/>
</dbReference>
<dbReference type="Gene3D" id="2.120.10.30">
    <property type="entry name" value="TolB, C-terminal domain"/>
    <property type="match status" value="1"/>
</dbReference>
<dbReference type="Gene3D" id="3.40.50.10070">
    <property type="entry name" value="TolB, N-terminal domain"/>
    <property type="match status" value="1"/>
</dbReference>
<dbReference type="HAMAP" id="MF_00671">
    <property type="entry name" value="TolB"/>
    <property type="match status" value="1"/>
</dbReference>
<dbReference type="InterPro" id="IPR011042">
    <property type="entry name" value="6-blade_b-propeller_TolB-like"/>
</dbReference>
<dbReference type="InterPro" id="IPR011659">
    <property type="entry name" value="PD40"/>
</dbReference>
<dbReference type="InterPro" id="IPR014167">
    <property type="entry name" value="Tol-Pal_TolB"/>
</dbReference>
<dbReference type="InterPro" id="IPR007195">
    <property type="entry name" value="TolB_N"/>
</dbReference>
<dbReference type="NCBIfam" id="TIGR02800">
    <property type="entry name" value="propeller_TolB"/>
    <property type="match status" value="1"/>
</dbReference>
<dbReference type="PANTHER" id="PTHR36842:SF1">
    <property type="entry name" value="PROTEIN TOLB"/>
    <property type="match status" value="1"/>
</dbReference>
<dbReference type="PANTHER" id="PTHR36842">
    <property type="entry name" value="PROTEIN TOLB HOMOLOG"/>
    <property type="match status" value="1"/>
</dbReference>
<dbReference type="Pfam" id="PF07676">
    <property type="entry name" value="PD40"/>
    <property type="match status" value="4"/>
</dbReference>
<dbReference type="Pfam" id="PF04052">
    <property type="entry name" value="TolB_N"/>
    <property type="match status" value="1"/>
</dbReference>
<dbReference type="SUPFAM" id="SSF52964">
    <property type="entry name" value="TolB, N-terminal domain"/>
    <property type="match status" value="1"/>
</dbReference>
<dbReference type="SUPFAM" id="SSF69304">
    <property type="entry name" value="Tricorn protease N-terminal domain"/>
    <property type="match status" value="1"/>
</dbReference>
<gene>
    <name evidence="1" type="primary">tolB</name>
    <name type="ordered locus">Swoo_2731</name>
</gene>
<protein>
    <recommendedName>
        <fullName evidence="1">Tol-Pal system protein TolB</fullName>
    </recommendedName>
</protein>
<evidence type="ECO:0000255" key="1">
    <source>
        <dbReference type="HAMAP-Rule" id="MF_00671"/>
    </source>
</evidence>
<organism>
    <name type="scientific">Shewanella woodyi (strain ATCC 51908 / MS32)</name>
    <dbReference type="NCBI Taxonomy" id="392500"/>
    <lineage>
        <taxon>Bacteria</taxon>
        <taxon>Pseudomonadati</taxon>
        <taxon>Pseudomonadota</taxon>
        <taxon>Gammaproteobacteria</taxon>
        <taxon>Alteromonadales</taxon>
        <taxon>Shewanellaceae</taxon>
        <taxon>Shewanella</taxon>
    </lineage>
</organism>
<keyword id="KW-0131">Cell cycle</keyword>
<keyword id="KW-0132">Cell division</keyword>
<keyword id="KW-0574">Periplasm</keyword>
<keyword id="KW-1185">Reference proteome</keyword>
<keyword id="KW-0732">Signal</keyword>